<comment type="function">
    <text evidence="1">A type II topoisomerase that negatively supercoils closed circular double-stranded (ds) DNA in an ATP-dependent manner to modulate DNA topology and maintain chromosomes in an underwound state. Negative supercoiling favors strand separation, and DNA replication, transcription, recombination and repair, all of which involve strand separation. Also able to catalyze the interconversion of other topological isomers of dsDNA rings, including catenanes and knotted rings. Type II topoisomerases break and join 2 DNA strands simultaneously in an ATP-dependent manner.</text>
</comment>
<comment type="catalytic activity">
    <reaction evidence="2">
        <text>ATP-dependent breakage, passage and rejoining of double-stranded DNA.</text>
        <dbReference type="EC" id="5.6.2.2"/>
    </reaction>
</comment>
<comment type="subunit">
    <text evidence="1">Heterotetramer, composed of two GyrA and two GyrB chains. In the heterotetramer, GyrA contains the active site tyrosine that forms a transient covalent intermediate with DNA, while GyrB binds cofactors and catalyzes ATP hydrolysis.</text>
</comment>
<comment type="subcellular location">
    <subcellularLocation>
        <location evidence="1">Cytoplasm</location>
    </subcellularLocation>
</comment>
<comment type="miscellaneous">
    <text evidence="1">Few gyrases are as efficient as E.coli at forming negative supercoils. Not all organisms have 2 type II topoisomerases; in organisms with a single type II topoisomerase this enzyme also has to decatenate newly replicated chromosomes.</text>
</comment>
<comment type="similarity">
    <text evidence="3">Belongs to the type II topoisomerase GyrB family.</text>
</comment>
<dbReference type="EC" id="5.6.2.2" evidence="2"/>
<dbReference type="EMBL" id="AB008693">
    <property type="protein sequence ID" value="BAA75410.1"/>
    <property type="molecule type" value="Genomic_DNA"/>
</dbReference>
<dbReference type="EMBL" id="AB008727">
    <property type="protein sequence ID" value="BAA75444.1"/>
    <property type="molecule type" value="Genomic_DNA"/>
</dbReference>
<dbReference type="EMBL" id="D73431">
    <property type="protein sequence ID" value="BAA11156.1"/>
    <property type="molecule type" value="Genomic_DNA"/>
</dbReference>
<dbReference type="EMBL" id="D73416">
    <property type="protein sequence ID" value="BAA11141.1"/>
    <property type="molecule type" value="Genomic_DNA"/>
</dbReference>
<dbReference type="PIR" id="T43906">
    <property type="entry name" value="T43906"/>
</dbReference>
<dbReference type="SMR" id="Q44080"/>
<dbReference type="STRING" id="40215.BVL33_01435"/>
<dbReference type="GO" id="GO:0005737">
    <property type="term" value="C:cytoplasm"/>
    <property type="evidence" value="ECO:0007669"/>
    <property type="project" value="UniProtKB-SubCell"/>
</dbReference>
<dbReference type="GO" id="GO:0005524">
    <property type="term" value="F:ATP binding"/>
    <property type="evidence" value="ECO:0007669"/>
    <property type="project" value="UniProtKB-KW"/>
</dbReference>
<dbReference type="GO" id="GO:0003677">
    <property type="term" value="F:DNA binding"/>
    <property type="evidence" value="ECO:0007669"/>
    <property type="project" value="UniProtKB-KW"/>
</dbReference>
<dbReference type="GO" id="GO:0003918">
    <property type="term" value="F:DNA topoisomerase type II (double strand cut, ATP-hydrolyzing) activity"/>
    <property type="evidence" value="ECO:0007669"/>
    <property type="project" value="UniProtKB-EC"/>
</dbReference>
<dbReference type="GO" id="GO:0006265">
    <property type="term" value="P:DNA topological change"/>
    <property type="evidence" value="ECO:0007669"/>
    <property type="project" value="InterPro"/>
</dbReference>
<dbReference type="CDD" id="cd00822">
    <property type="entry name" value="TopoII_Trans_DNA_gyrase"/>
    <property type="match status" value="1"/>
</dbReference>
<dbReference type="FunFam" id="3.30.230.10:FF:000005">
    <property type="entry name" value="DNA gyrase subunit B"/>
    <property type="match status" value="1"/>
</dbReference>
<dbReference type="Gene3D" id="3.30.230.10">
    <property type="match status" value="1"/>
</dbReference>
<dbReference type="Gene3D" id="3.40.50.670">
    <property type="match status" value="1"/>
</dbReference>
<dbReference type="Gene3D" id="3.30.565.10">
    <property type="entry name" value="Histidine kinase-like ATPase, C-terminal domain"/>
    <property type="match status" value="1"/>
</dbReference>
<dbReference type="InterPro" id="IPR036890">
    <property type="entry name" value="HATPase_C_sf"/>
</dbReference>
<dbReference type="InterPro" id="IPR020568">
    <property type="entry name" value="Ribosomal_Su5_D2-typ_SF"/>
</dbReference>
<dbReference type="InterPro" id="IPR014721">
    <property type="entry name" value="Ribsml_uS5_D2-typ_fold_subgr"/>
</dbReference>
<dbReference type="InterPro" id="IPR001241">
    <property type="entry name" value="Topo_IIA"/>
</dbReference>
<dbReference type="InterPro" id="IPR013760">
    <property type="entry name" value="Topo_IIA-like_dom_sf"/>
</dbReference>
<dbReference type="InterPro" id="IPR000565">
    <property type="entry name" value="Topo_IIA_B"/>
</dbReference>
<dbReference type="InterPro" id="IPR013759">
    <property type="entry name" value="Topo_IIA_B_C"/>
</dbReference>
<dbReference type="InterPro" id="IPR013506">
    <property type="entry name" value="Topo_IIA_bsu_dom2"/>
</dbReference>
<dbReference type="InterPro" id="IPR018522">
    <property type="entry name" value="TopoIIA_CS"/>
</dbReference>
<dbReference type="InterPro" id="IPR006171">
    <property type="entry name" value="TOPRIM_dom"/>
</dbReference>
<dbReference type="PANTHER" id="PTHR45866:SF1">
    <property type="entry name" value="DNA GYRASE SUBUNIT B, MITOCHONDRIAL"/>
    <property type="match status" value="1"/>
</dbReference>
<dbReference type="PANTHER" id="PTHR45866">
    <property type="entry name" value="DNA GYRASE/TOPOISOMERASE SUBUNIT B"/>
    <property type="match status" value="1"/>
</dbReference>
<dbReference type="Pfam" id="PF00204">
    <property type="entry name" value="DNA_gyraseB"/>
    <property type="match status" value="1"/>
</dbReference>
<dbReference type="Pfam" id="PF01751">
    <property type="entry name" value="Toprim"/>
    <property type="match status" value="1"/>
</dbReference>
<dbReference type="PRINTS" id="PR01159">
    <property type="entry name" value="DNAGYRASEB"/>
</dbReference>
<dbReference type="PRINTS" id="PR00418">
    <property type="entry name" value="TPI2FAMILY"/>
</dbReference>
<dbReference type="SMART" id="SM00433">
    <property type="entry name" value="TOP2c"/>
    <property type="match status" value="1"/>
</dbReference>
<dbReference type="SUPFAM" id="SSF55874">
    <property type="entry name" value="ATPase domain of HSP90 chaperone/DNA topoisomerase II/histidine kinase"/>
    <property type="match status" value="1"/>
</dbReference>
<dbReference type="SUPFAM" id="SSF54211">
    <property type="entry name" value="Ribosomal protein S5 domain 2-like"/>
    <property type="match status" value="1"/>
</dbReference>
<dbReference type="SUPFAM" id="SSF56719">
    <property type="entry name" value="Type II DNA topoisomerase"/>
    <property type="match status" value="1"/>
</dbReference>
<dbReference type="PROSITE" id="PS00177">
    <property type="entry name" value="TOPOISOMERASE_II"/>
    <property type="match status" value="1"/>
</dbReference>
<dbReference type="PROSITE" id="PS50880">
    <property type="entry name" value="TOPRIM"/>
    <property type="match status" value="1"/>
</dbReference>
<keyword id="KW-0067">ATP-binding</keyword>
<keyword id="KW-0963">Cytoplasm</keyword>
<keyword id="KW-0238">DNA-binding</keyword>
<keyword id="KW-0413">Isomerase</keyword>
<keyword id="KW-0547">Nucleotide-binding</keyword>
<keyword id="KW-0799">Topoisomerase</keyword>
<evidence type="ECO:0000250" key="1">
    <source>
        <dbReference type="UniProtKB" id="P0AES6"/>
    </source>
</evidence>
<evidence type="ECO:0000255" key="2">
    <source>
        <dbReference type="PROSITE-ProRule" id="PRU00995"/>
    </source>
</evidence>
<evidence type="ECO:0000305" key="3"/>
<reference key="1">
    <citation type="journal article" date="1999" name="Int. J. Syst. Bacteriol.">
        <title>Phylogenetic structures of the genus Acinetobacter based on gyrB sequences: comparison with the grouping by DNA-DNA hybridization.</title>
        <authorList>
            <person name="Yamamoto S."/>
            <person name="Bouvet P.J.M."/>
            <person name="Harayama S."/>
        </authorList>
    </citation>
    <scope>NUCLEOTIDE SEQUENCE [GENOMIC DNA]</scope>
    <source>
        <strain>ATCC 17908 / DSM 6964 / CCUG 889 / KCTC 12406 / NCTC 10307 / CIP 64.5 / B10</strain>
        <strain>SEIP 14.81</strain>
    </source>
</reference>
<reference key="2">
    <citation type="journal article" date="1996" name="Int. J. Syst. Bacteriol.">
        <title>Phylogenetic analysis of Acinetobacter strains based on the nucleotide sequences of gyrB genes and on the amino acid sequences of their products.</title>
        <authorList>
            <person name="Yamamoto S."/>
            <person name="Harayama S."/>
        </authorList>
    </citation>
    <scope>NUCLEOTIDE SEQUENCE [GENOMIC DNA] OF 3-118 AND 289-388</scope>
    <source>
        <strain>ATCC 17908 / DSM 6964 / CCUG 889 / KCTC 12406 / NCTC 10307 / CIP 64.5 / B10</strain>
    </source>
</reference>
<proteinExistence type="inferred from homology"/>
<name>GYRB_ACIJU</name>
<accession>Q44080</accession>
<accession>Q59122</accession>
<accession>Q9ZA01</accession>
<gene>
    <name type="primary">gyrB</name>
</gene>
<feature type="chain" id="PRO_0000145278" description="DNA gyrase subunit B">
    <location>
        <begin position="1" status="less than"/>
        <end position="388" status="greater than"/>
    </location>
</feature>
<feature type="domain" description="Toprim" evidence="2">
    <location>
        <begin position="312"/>
        <end position="388" status="greater than"/>
    </location>
</feature>
<feature type="site" description="Interaction with DNA" evidence="2">
    <location>
        <position position="343"/>
    </location>
</feature>
<feature type="site" description="Interaction with DNA" evidence="2">
    <location>
        <position position="346"/>
    </location>
</feature>
<feature type="sequence conflict" description="In Ref. 2; BAA11156." evidence="3" ref="2">
    <original>G</original>
    <variation>R</variation>
    <location>
        <position position="12"/>
    </location>
</feature>
<feature type="sequence conflict" description="In Ref. 2; BAA11141." evidence="3" ref="2">
    <original>D</original>
    <variation>G</variation>
    <location>
        <position position="303"/>
    </location>
</feature>
<feature type="non-terminal residue">
    <location>
        <position position="1"/>
    </location>
</feature>
<feature type="non-terminal residue">
    <location>
        <position position="388"/>
    </location>
</feature>
<organism>
    <name type="scientific">Acinetobacter junii</name>
    <dbReference type="NCBI Taxonomy" id="40215"/>
    <lineage>
        <taxon>Bacteria</taxon>
        <taxon>Pseudomonadati</taxon>
        <taxon>Pseudomonadota</taxon>
        <taxon>Gammaproteobacteria</taxon>
        <taxon>Moraxellales</taxon>
        <taxon>Moraxellaceae</taxon>
        <taxon>Acinetobacter</taxon>
    </lineage>
</organism>
<sequence>DNSYKVSGGLHGVGVSVVNALSKKLHLTIQRAGQIHEQEYCHGDPQYPLKVVGETDKTGTTVRFWPSELTFSQTIFSVDILARRLRELSFLNAGVRIVLRDERVNLENVYDYEGGLSEFVKYINEGKTHLNEIFHFTTDADNGIGVEVALQWNDSYQENVRCFTNNIPQKDGGTHLAGFRAALTRGLNSYMENENLLKKEKVAVSGDDAREGLTAIISVKVPDPKFSSQTKEKLVSSEVKPAVEQAMNKEFSAYLLENPQAAKSIAGKIIDAARARDAARRAREMTRRKSALDIAGLPGKLADCQEKDPALSELYLVEGDSAGGSAKQGRNRKMQAILPLKGKILNVERARFDKMISSQEVGTLITALGCGIGREEYNPDKLRYHKII</sequence>
<protein>
    <recommendedName>
        <fullName>DNA gyrase subunit B</fullName>
        <ecNumber evidence="2">5.6.2.2</ecNumber>
    </recommendedName>
</protein>